<gene>
    <name evidence="1" type="primary">rph</name>
    <name type="ordered locus">Exig_2152</name>
</gene>
<protein>
    <recommendedName>
        <fullName evidence="1">Ribonuclease PH</fullName>
        <shortName evidence="1">RNase PH</shortName>
        <ecNumber evidence="1">2.7.7.56</ecNumber>
    </recommendedName>
    <alternativeName>
        <fullName evidence="1">tRNA nucleotidyltransferase</fullName>
    </alternativeName>
</protein>
<organism>
    <name type="scientific">Exiguobacterium sibiricum (strain DSM 17290 / CCUG 55495 / CIP 109462 / JCM 13490 / 255-15)</name>
    <dbReference type="NCBI Taxonomy" id="262543"/>
    <lineage>
        <taxon>Bacteria</taxon>
        <taxon>Bacillati</taxon>
        <taxon>Bacillota</taxon>
        <taxon>Bacilli</taxon>
        <taxon>Bacillales</taxon>
        <taxon>Bacillales Family XII. Incertae Sedis</taxon>
        <taxon>Exiguobacterium</taxon>
    </lineage>
</organism>
<feature type="chain" id="PRO_1000129343" description="Ribonuclease PH">
    <location>
        <begin position="1"/>
        <end position="250"/>
    </location>
</feature>
<feature type="binding site" evidence="1">
    <location>
        <position position="86"/>
    </location>
    <ligand>
        <name>phosphate</name>
        <dbReference type="ChEBI" id="CHEBI:43474"/>
        <note>substrate</note>
    </ligand>
</feature>
<feature type="binding site" evidence="1">
    <location>
        <begin position="124"/>
        <end position="126"/>
    </location>
    <ligand>
        <name>phosphate</name>
        <dbReference type="ChEBI" id="CHEBI:43474"/>
        <note>substrate</note>
    </ligand>
</feature>
<name>RNPH_EXIS2</name>
<reference key="1">
    <citation type="submission" date="2008-04" db="EMBL/GenBank/DDBJ databases">
        <title>Complete sequence of chromosome of Exiguobacterium sibiricum 255-15.</title>
        <authorList>
            <consortium name="US DOE Joint Genome Institute"/>
            <person name="Copeland A."/>
            <person name="Lucas S."/>
            <person name="Lapidus A."/>
            <person name="Glavina del Rio T."/>
            <person name="Dalin E."/>
            <person name="Tice H."/>
            <person name="Bruce D."/>
            <person name="Goodwin L."/>
            <person name="Pitluck S."/>
            <person name="Kiss H."/>
            <person name="Chertkov O."/>
            <person name="Monk C."/>
            <person name="Brettin T."/>
            <person name="Detter J.C."/>
            <person name="Han C."/>
            <person name="Kuske C.R."/>
            <person name="Schmutz J."/>
            <person name="Larimer F."/>
            <person name="Land M."/>
            <person name="Hauser L."/>
            <person name="Kyrpides N."/>
            <person name="Mikhailova N."/>
            <person name="Vishnivetskaya T."/>
            <person name="Rodrigues D.F."/>
            <person name="Gilichinsky D."/>
            <person name="Tiedje J."/>
            <person name="Richardson P."/>
        </authorList>
    </citation>
    <scope>NUCLEOTIDE SEQUENCE [LARGE SCALE GENOMIC DNA]</scope>
    <source>
        <strain>DSM 17290 / CCUG 55495 / CIP 109462 / JCM 13490 / 255-15</strain>
    </source>
</reference>
<accession>B1YJW6</accession>
<dbReference type="EC" id="2.7.7.56" evidence="1"/>
<dbReference type="EMBL" id="CP001022">
    <property type="protein sequence ID" value="ACB61604.1"/>
    <property type="molecule type" value="Genomic_DNA"/>
</dbReference>
<dbReference type="RefSeq" id="WP_012371021.1">
    <property type="nucleotide sequence ID" value="NC_010556.1"/>
</dbReference>
<dbReference type="SMR" id="B1YJW6"/>
<dbReference type="STRING" id="262543.Exig_2152"/>
<dbReference type="KEGG" id="esi:Exig_2152"/>
<dbReference type="eggNOG" id="COG0689">
    <property type="taxonomic scope" value="Bacteria"/>
</dbReference>
<dbReference type="HOGENOM" id="CLU_050858_0_0_9"/>
<dbReference type="OrthoDB" id="9802265at2"/>
<dbReference type="Proteomes" id="UP000001681">
    <property type="component" value="Chromosome"/>
</dbReference>
<dbReference type="GO" id="GO:0000175">
    <property type="term" value="F:3'-5'-RNA exonuclease activity"/>
    <property type="evidence" value="ECO:0007669"/>
    <property type="project" value="UniProtKB-UniRule"/>
</dbReference>
<dbReference type="GO" id="GO:0000049">
    <property type="term" value="F:tRNA binding"/>
    <property type="evidence" value="ECO:0007669"/>
    <property type="project" value="UniProtKB-UniRule"/>
</dbReference>
<dbReference type="GO" id="GO:0009022">
    <property type="term" value="F:tRNA nucleotidyltransferase activity"/>
    <property type="evidence" value="ECO:0007669"/>
    <property type="project" value="UniProtKB-UniRule"/>
</dbReference>
<dbReference type="GO" id="GO:0016075">
    <property type="term" value="P:rRNA catabolic process"/>
    <property type="evidence" value="ECO:0007669"/>
    <property type="project" value="UniProtKB-UniRule"/>
</dbReference>
<dbReference type="GO" id="GO:0006364">
    <property type="term" value="P:rRNA processing"/>
    <property type="evidence" value="ECO:0007669"/>
    <property type="project" value="UniProtKB-KW"/>
</dbReference>
<dbReference type="GO" id="GO:0008033">
    <property type="term" value="P:tRNA processing"/>
    <property type="evidence" value="ECO:0007669"/>
    <property type="project" value="UniProtKB-UniRule"/>
</dbReference>
<dbReference type="CDD" id="cd11362">
    <property type="entry name" value="RNase_PH_bact"/>
    <property type="match status" value="1"/>
</dbReference>
<dbReference type="FunFam" id="3.30.230.70:FF:000003">
    <property type="entry name" value="Ribonuclease PH"/>
    <property type="match status" value="1"/>
</dbReference>
<dbReference type="Gene3D" id="3.30.230.70">
    <property type="entry name" value="GHMP Kinase, N-terminal domain"/>
    <property type="match status" value="1"/>
</dbReference>
<dbReference type="HAMAP" id="MF_00564">
    <property type="entry name" value="RNase_PH"/>
    <property type="match status" value="1"/>
</dbReference>
<dbReference type="InterPro" id="IPR001247">
    <property type="entry name" value="ExoRNase_PH_dom1"/>
</dbReference>
<dbReference type="InterPro" id="IPR015847">
    <property type="entry name" value="ExoRNase_PH_dom2"/>
</dbReference>
<dbReference type="InterPro" id="IPR036345">
    <property type="entry name" value="ExoRNase_PH_dom2_sf"/>
</dbReference>
<dbReference type="InterPro" id="IPR027408">
    <property type="entry name" value="PNPase/RNase_PH_dom_sf"/>
</dbReference>
<dbReference type="InterPro" id="IPR020568">
    <property type="entry name" value="Ribosomal_Su5_D2-typ_SF"/>
</dbReference>
<dbReference type="InterPro" id="IPR050080">
    <property type="entry name" value="RNase_PH"/>
</dbReference>
<dbReference type="InterPro" id="IPR002381">
    <property type="entry name" value="RNase_PH_bac-type"/>
</dbReference>
<dbReference type="InterPro" id="IPR018336">
    <property type="entry name" value="RNase_PH_CS"/>
</dbReference>
<dbReference type="NCBIfam" id="TIGR01966">
    <property type="entry name" value="RNasePH"/>
    <property type="match status" value="1"/>
</dbReference>
<dbReference type="PANTHER" id="PTHR11953">
    <property type="entry name" value="EXOSOME COMPLEX COMPONENT"/>
    <property type="match status" value="1"/>
</dbReference>
<dbReference type="PANTHER" id="PTHR11953:SF0">
    <property type="entry name" value="EXOSOME COMPLEX COMPONENT RRP41"/>
    <property type="match status" value="1"/>
</dbReference>
<dbReference type="Pfam" id="PF01138">
    <property type="entry name" value="RNase_PH"/>
    <property type="match status" value="1"/>
</dbReference>
<dbReference type="Pfam" id="PF03725">
    <property type="entry name" value="RNase_PH_C"/>
    <property type="match status" value="1"/>
</dbReference>
<dbReference type="SUPFAM" id="SSF55666">
    <property type="entry name" value="Ribonuclease PH domain 2-like"/>
    <property type="match status" value="1"/>
</dbReference>
<dbReference type="SUPFAM" id="SSF54211">
    <property type="entry name" value="Ribosomal protein S5 domain 2-like"/>
    <property type="match status" value="1"/>
</dbReference>
<dbReference type="PROSITE" id="PS01277">
    <property type="entry name" value="RIBONUCLEASE_PH"/>
    <property type="match status" value="1"/>
</dbReference>
<comment type="function">
    <text evidence="1">Phosphorolytic 3'-5' exoribonuclease that plays an important role in tRNA 3'-end maturation. Removes nucleotide residues following the 3'-CCA terminus of tRNAs; can also add nucleotides to the ends of RNA molecules by using nucleoside diphosphates as substrates, but this may not be physiologically important. Probably plays a role in initiation of 16S rRNA degradation (leading to ribosome degradation) during starvation.</text>
</comment>
<comment type="catalytic activity">
    <reaction evidence="1">
        <text>tRNA(n+1) + phosphate = tRNA(n) + a ribonucleoside 5'-diphosphate</text>
        <dbReference type="Rhea" id="RHEA:10628"/>
        <dbReference type="Rhea" id="RHEA-COMP:17343"/>
        <dbReference type="Rhea" id="RHEA-COMP:17344"/>
        <dbReference type="ChEBI" id="CHEBI:43474"/>
        <dbReference type="ChEBI" id="CHEBI:57930"/>
        <dbReference type="ChEBI" id="CHEBI:173114"/>
        <dbReference type="EC" id="2.7.7.56"/>
    </reaction>
</comment>
<comment type="subunit">
    <text evidence="1">Homohexameric ring arranged as a trimer of dimers.</text>
</comment>
<comment type="similarity">
    <text evidence="1">Belongs to the RNase PH family.</text>
</comment>
<keyword id="KW-0548">Nucleotidyltransferase</keyword>
<keyword id="KW-1185">Reference proteome</keyword>
<keyword id="KW-0694">RNA-binding</keyword>
<keyword id="KW-0698">rRNA processing</keyword>
<keyword id="KW-0808">Transferase</keyword>
<keyword id="KW-0819">tRNA processing</keyword>
<keyword id="KW-0820">tRNA-binding</keyword>
<evidence type="ECO:0000255" key="1">
    <source>
        <dbReference type="HAMAP-Rule" id="MF_00564"/>
    </source>
</evidence>
<proteinExistence type="inferred from homology"/>
<sequence>MRLDQRAQSDMRKIQLETDVNKHAEGSVLISVGDTRVLCTATVEEKVPPFLRGKRHGWINAEYAMLPRATAQRTGREAVRGKQTGRTMEIQRLISRALRSVVNLEKLGERTVWIDCDVLQADGGTRTAAITGGFLALVLAVDGLIQSGKLTDTPIKEGIAAVSVGKVGTELLLDLCYEEDAAADVDLNLVMTSSGKIVELQATGEEATFSRKEMLDMLELGEKGIEELLHAAEQSLGASWWYVGEEVEHK</sequence>